<protein>
    <recommendedName>
        <fullName>Beta-lactoglobulin-1</fullName>
        <shortName>Beta-LG-1</shortName>
    </recommendedName>
    <alternativeName>
        <fullName>Beta-lactoglobulin I</fullName>
        <shortName>BLGI</shortName>
    </alternativeName>
</protein>
<feature type="signal peptide" evidence="1">
    <location>
        <begin position="1"/>
        <end position="18"/>
    </location>
</feature>
<feature type="chain" id="PRO_0000017906" description="Beta-lactoglobulin-1">
    <location>
        <begin position="19"/>
        <end position="180"/>
    </location>
</feature>
<feature type="disulfide bond">
    <location>
        <begin position="84"/>
        <end position="178"/>
    </location>
</feature>
<feature type="disulfide bond">
    <location>
        <begin position="124"/>
        <end position="137"/>
    </location>
</feature>
<feature type="sequence conflict" description="In Ref. 2; AA sequence." evidence="2" ref="2">
    <original>S</original>
    <variation>E</variation>
    <location>
        <position position="54"/>
    </location>
</feature>
<feature type="helix" evidence="3">
    <location>
        <begin position="30"/>
        <end position="33"/>
    </location>
</feature>
<feature type="strand" evidence="3">
    <location>
        <begin position="99"/>
        <end position="102"/>
    </location>
</feature>
<feature type="strand" evidence="3">
    <location>
        <begin position="119"/>
        <end position="121"/>
    </location>
</feature>
<feature type="helix" evidence="3">
    <location>
        <begin position="131"/>
        <end position="133"/>
    </location>
</feature>
<sequence length="180" mass="20345">MKCLLLALGLALMCGIQATNIPQTMQDLDLQEVAGKWHSVAMAASDISLLDSESAPLRVYIEKLRPTPEDNLEIILREGENKGCAEKKIFAEKTESPAEFKINYLDEDTVFALDTDYKNYLFLCMKNAATPGQSLVCQYLARTQMVDEEIMEKFRRALQPLPGRVQIVPDLTRMAERCRI</sequence>
<dbReference type="EMBL" id="U60356">
    <property type="protein sequence ID" value="AAB03511.1"/>
    <property type="molecule type" value="mRNA"/>
</dbReference>
<dbReference type="PIR" id="A03222">
    <property type="entry name" value="LGHO"/>
</dbReference>
<dbReference type="RefSeq" id="NP_001075962.1">
    <property type="nucleotide sequence ID" value="NM_001082493.3"/>
</dbReference>
<dbReference type="PDB" id="3KZA">
    <property type="method" value="X-ray"/>
    <property type="resolution" value="2.00 A"/>
    <property type="chains" value="A/B=19-180"/>
</dbReference>
<dbReference type="PDBsum" id="3KZA"/>
<dbReference type="SMR" id="P02758"/>
<dbReference type="FunCoup" id="P02758">
    <property type="interactions" value="3"/>
</dbReference>
<dbReference type="STRING" id="9796.ENSECAP00000007932"/>
<dbReference type="Allergome" id="1499">
    <property type="allergen name" value="Equ c BLG"/>
</dbReference>
<dbReference type="PaxDb" id="9796-ENSECAP00000007932"/>
<dbReference type="PeptideAtlas" id="P02758"/>
<dbReference type="GeneID" id="100034193"/>
<dbReference type="KEGG" id="ecb:100034193"/>
<dbReference type="CTD" id="100034193"/>
<dbReference type="HOGENOM" id="CLU_094061_5_0_1"/>
<dbReference type="InParanoid" id="P02758"/>
<dbReference type="OrthoDB" id="9835883at2759"/>
<dbReference type="TreeFam" id="TF342475"/>
<dbReference type="EvolutionaryTrace" id="P02758"/>
<dbReference type="Proteomes" id="UP000002281">
    <property type="component" value="Unplaced"/>
</dbReference>
<dbReference type="GO" id="GO:0005576">
    <property type="term" value="C:extracellular region"/>
    <property type="evidence" value="ECO:0007669"/>
    <property type="project" value="UniProtKB-SubCell"/>
</dbReference>
<dbReference type="GO" id="GO:0019841">
    <property type="term" value="F:retinol binding"/>
    <property type="evidence" value="ECO:0007669"/>
    <property type="project" value="UniProtKB-KW"/>
</dbReference>
<dbReference type="CDD" id="cd19416">
    <property type="entry name" value="lipocalin_beta-LG-like"/>
    <property type="match status" value="1"/>
</dbReference>
<dbReference type="Gene3D" id="2.40.128.20">
    <property type="match status" value="1"/>
</dbReference>
<dbReference type="InterPro" id="IPR002447">
    <property type="entry name" value="Blactoglobulin"/>
</dbReference>
<dbReference type="InterPro" id="IPR012674">
    <property type="entry name" value="Calycin"/>
</dbReference>
<dbReference type="InterPro" id="IPR002345">
    <property type="entry name" value="Lipocalin"/>
</dbReference>
<dbReference type="InterPro" id="IPR022272">
    <property type="entry name" value="Lipocalin_CS"/>
</dbReference>
<dbReference type="InterPro" id="IPR000566">
    <property type="entry name" value="Lipocln_cytosolic_FA-bd_dom"/>
</dbReference>
<dbReference type="PANTHER" id="PTHR11430:SF117">
    <property type="entry name" value="GLYCODELIN"/>
    <property type="match status" value="1"/>
</dbReference>
<dbReference type="PANTHER" id="PTHR11430">
    <property type="entry name" value="LIPOCALIN"/>
    <property type="match status" value="1"/>
</dbReference>
<dbReference type="Pfam" id="PF00061">
    <property type="entry name" value="Lipocalin"/>
    <property type="match status" value="1"/>
</dbReference>
<dbReference type="PRINTS" id="PR01172">
    <property type="entry name" value="BLCTOGLOBULN"/>
</dbReference>
<dbReference type="PRINTS" id="PR00179">
    <property type="entry name" value="LIPOCALIN"/>
</dbReference>
<dbReference type="SUPFAM" id="SSF50814">
    <property type="entry name" value="Lipocalins"/>
    <property type="match status" value="1"/>
</dbReference>
<dbReference type="PROSITE" id="PS00213">
    <property type="entry name" value="LIPOCALIN"/>
    <property type="match status" value="1"/>
</dbReference>
<keyword id="KW-0002">3D-structure</keyword>
<keyword id="KW-0903">Direct protein sequencing</keyword>
<keyword id="KW-1015">Disulfide bond</keyword>
<keyword id="KW-0494">Milk protein</keyword>
<keyword id="KW-1185">Reference proteome</keyword>
<keyword id="KW-0683">Retinol-binding</keyword>
<keyword id="KW-0964">Secreted</keyword>
<keyword id="KW-0732">Signal</keyword>
<keyword id="KW-0813">Transport</keyword>
<gene>
    <name type="primary">LGB1</name>
</gene>
<accession>P02758</accession>
<accession>Q28394</accession>
<evidence type="ECO:0000269" key="1">
    <source>
    </source>
</evidence>
<evidence type="ECO:0000305" key="2"/>
<evidence type="ECO:0007829" key="3">
    <source>
        <dbReference type="PDB" id="3KZA"/>
    </source>
</evidence>
<reference key="1">
    <citation type="submission" date="1996-07" db="EMBL/GenBank/DDBJ databases">
        <title>Comparison of the equine I and II beta-lactoglobulin genes.</title>
        <authorList>
            <person name="Masel A.M."/>
            <person name="Bell K.T."/>
        </authorList>
    </citation>
    <scope>NUCLEOTIDE SEQUENCE [MRNA]</scope>
</reference>
<reference key="2">
    <citation type="journal article" date="1984" name="Hoppe-Seyler's Z. Physiol. Chem.">
        <title>The primary structure of monomeric beta-lactoglobulin I from horse colostrum (Equus caballus, Perissodactyla).</title>
        <authorList>
            <person name="Conti A."/>
            <person name="Godovac-Zimmermann J."/>
            <person name="Liberatori J."/>
            <person name="Braunitzer G."/>
        </authorList>
    </citation>
    <scope>PROTEIN SEQUENCE OF 19-180</scope>
</reference>
<reference key="3">
    <citation type="journal article" date="1991" name="Biochim. Biophys. Acta">
        <title>The complete amino acid sequence of feline beta-lactoglobulin II and a partial revision of the equine beta-lactoglobulin II sequence.</title>
        <authorList>
            <person name="Halliday J.A."/>
            <person name="Bell K."/>
            <person name="Shaw D.C."/>
        </authorList>
    </citation>
    <scope>SEQUENCE REVISION TO 95; 99; 104 AND 112</scope>
</reference>
<comment type="function">
    <text>Lactoglobulin is the primary component of whey, it binds retinol and is probably involved in the transport of that molecule.</text>
</comment>
<comment type="subunit">
    <text>Monomer.</text>
</comment>
<comment type="subcellular location">
    <subcellularLocation>
        <location>Secreted</location>
    </subcellularLocation>
</comment>
<comment type="similarity">
    <text evidence="2">Belongs to the calycin superfamily. Lipocalin family.</text>
</comment>
<name>LACB1_HORSE</name>
<organism>
    <name type="scientific">Equus caballus</name>
    <name type="common">Horse</name>
    <dbReference type="NCBI Taxonomy" id="9796"/>
    <lineage>
        <taxon>Eukaryota</taxon>
        <taxon>Metazoa</taxon>
        <taxon>Chordata</taxon>
        <taxon>Craniata</taxon>
        <taxon>Vertebrata</taxon>
        <taxon>Euteleostomi</taxon>
        <taxon>Mammalia</taxon>
        <taxon>Eutheria</taxon>
        <taxon>Laurasiatheria</taxon>
        <taxon>Perissodactyla</taxon>
        <taxon>Equidae</taxon>
        <taxon>Equus</taxon>
    </lineage>
</organism>
<proteinExistence type="evidence at protein level"/>